<reference key="1">
    <citation type="submission" date="2006-03" db="EMBL/GenBank/DDBJ databases">
        <title>Complete sequence of Rhodopseudomonas palustris BisB18.</title>
        <authorList>
            <consortium name="US DOE Joint Genome Institute"/>
            <person name="Copeland A."/>
            <person name="Lucas S."/>
            <person name="Lapidus A."/>
            <person name="Barry K."/>
            <person name="Detter J.C."/>
            <person name="Glavina del Rio T."/>
            <person name="Hammon N."/>
            <person name="Israni S."/>
            <person name="Dalin E."/>
            <person name="Tice H."/>
            <person name="Pitluck S."/>
            <person name="Chain P."/>
            <person name="Malfatti S."/>
            <person name="Shin M."/>
            <person name="Vergez L."/>
            <person name="Schmutz J."/>
            <person name="Larimer F."/>
            <person name="Land M."/>
            <person name="Hauser L."/>
            <person name="Pelletier D.A."/>
            <person name="Kyrpides N."/>
            <person name="Anderson I."/>
            <person name="Oda Y."/>
            <person name="Harwood C.S."/>
            <person name="Richardson P."/>
        </authorList>
    </citation>
    <scope>NUCLEOTIDE SEQUENCE [LARGE SCALE GENOMIC DNA]</scope>
    <source>
        <strain>BisB18</strain>
    </source>
</reference>
<sequence length="206" mass="22218">MTEQPTNRNDVPRRGLGRDATVASICGLVVALMVGASYAAVPFYNWFCRATGFNGTTQVATAAPIAAPLPRKITVRFDSNVNGLPWKFTPEQTEIEIPIGQVVTVFYTVTNLSAHETTGQAAYNVAPLTVGAYFQKINCFCFTEQTFAAGETREMPVVFYVDPALAADPENDGLNSITLSYTFYPVRAPTPKPVAAGEPDSRKGAL</sequence>
<keyword id="KW-0997">Cell inner membrane</keyword>
<keyword id="KW-1003">Cell membrane</keyword>
<keyword id="KW-0186">Copper</keyword>
<keyword id="KW-0472">Membrane</keyword>
<keyword id="KW-0735">Signal-anchor</keyword>
<keyword id="KW-0812">Transmembrane</keyword>
<keyword id="KW-1133">Transmembrane helix</keyword>
<feature type="chain" id="PRO_0000246141" description="Cytochrome c oxidase assembly protein CtaG">
    <location>
        <begin position="1"/>
        <end position="206"/>
    </location>
</feature>
<feature type="topological domain" description="Cytoplasmic" evidence="1">
    <location>
        <begin position="1"/>
        <end position="22"/>
    </location>
</feature>
<feature type="transmembrane region" description="Helical; Signal-anchor for type II membrane protein" evidence="1">
    <location>
        <begin position="23"/>
        <end position="43"/>
    </location>
</feature>
<feature type="topological domain" description="Periplasmic" evidence="1">
    <location>
        <begin position="44"/>
        <end position="206"/>
    </location>
</feature>
<evidence type="ECO:0000255" key="1">
    <source>
        <dbReference type="HAMAP-Rule" id="MF_00155"/>
    </source>
</evidence>
<proteinExistence type="inferred from homology"/>
<organism>
    <name type="scientific">Rhodopseudomonas palustris (strain BisB18)</name>
    <dbReference type="NCBI Taxonomy" id="316056"/>
    <lineage>
        <taxon>Bacteria</taxon>
        <taxon>Pseudomonadati</taxon>
        <taxon>Pseudomonadota</taxon>
        <taxon>Alphaproteobacteria</taxon>
        <taxon>Hyphomicrobiales</taxon>
        <taxon>Nitrobacteraceae</taxon>
        <taxon>Rhodopseudomonas</taxon>
    </lineage>
</organism>
<gene>
    <name evidence="1" type="primary">ctaG</name>
    <name type="ordered locus">RPC_4791</name>
</gene>
<comment type="function">
    <text evidence="1">Exerts its effect at some terminal stage of cytochrome c oxidase synthesis, probably by being involved in the insertion of the copper B into subunit I.</text>
</comment>
<comment type="subcellular location">
    <subcellularLocation>
        <location evidence="1">Cell inner membrane</location>
        <topology evidence="1">Single-pass type II membrane protein</topology>
        <orientation evidence="1">Periplasmic side</orientation>
    </subcellularLocation>
</comment>
<comment type="similarity">
    <text evidence="1">Belongs to the COX11/CtaG family.</text>
</comment>
<accession>Q20X23</accession>
<protein>
    <recommendedName>
        <fullName evidence="1">Cytochrome c oxidase assembly protein CtaG</fullName>
    </recommendedName>
</protein>
<name>COXZ_RHOPB</name>
<dbReference type="EMBL" id="CP000301">
    <property type="protein sequence ID" value="ABD90313.1"/>
    <property type="molecule type" value="Genomic_DNA"/>
</dbReference>
<dbReference type="SMR" id="Q20X23"/>
<dbReference type="STRING" id="316056.RPC_4791"/>
<dbReference type="KEGG" id="rpc:RPC_4791"/>
<dbReference type="eggNOG" id="COG3175">
    <property type="taxonomic scope" value="Bacteria"/>
</dbReference>
<dbReference type="HOGENOM" id="CLU_045000_5_0_5"/>
<dbReference type="OrthoDB" id="9804841at2"/>
<dbReference type="GO" id="GO:0005886">
    <property type="term" value="C:plasma membrane"/>
    <property type="evidence" value="ECO:0007669"/>
    <property type="project" value="UniProtKB-SubCell"/>
</dbReference>
<dbReference type="GO" id="GO:0005507">
    <property type="term" value="F:copper ion binding"/>
    <property type="evidence" value="ECO:0007669"/>
    <property type="project" value="InterPro"/>
</dbReference>
<dbReference type="GO" id="GO:0008535">
    <property type="term" value="P:respiratory chain complex IV assembly"/>
    <property type="evidence" value="ECO:0007669"/>
    <property type="project" value="UniProtKB-UniRule"/>
</dbReference>
<dbReference type="FunFam" id="2.60.370.10:FF:000001">
    <property type="entry name" value="COX11 cytochrome c oxidase assembly homolog"/>
    <property type="match status" value="1"/>
</dbReference>
<dbReference type="Gene3D" id="2.60.370.10">
    <property type="entry name" value="Ctag/Cox11"/>
    <property type="match status" value="1"/>
</dbReference>
<dbReference type="HAMAP" id="MF_00155">
    <property type="entry name" value="CtaG"/>
    <property type="match status" value="1"/>
</dbReference>
<dbReference type="InterPro" id="IPR023471">
    <property type="entry name" value="CtaG/Cox11_dom_sf"/>
</dbReference>
<dbReference type="InterPro" id="IPR007533">
    <property type="entry name" value="Cyt_c_oxidase_assmbl_CtaG"/>
</dbReference>
<dbReference type="NCBIfam" id="NF003465">
    <property type="entry name" value="PRK05089.1"/>
    <property type="match status" value="1"/>
</dbReference>
<dbReference type="PANTHER" id="PTHR21320:SF3">
    <property type="entry name" value="CYTOCHROME C OXIDASE ASSEMBLY PROTEIN COX11, MITOCHONDRIAL-RELATED"/>
    <property type="match status" value="1"/>
</dbReference>
<dbReference type="PANTHER" id="PTHR21320">
    <property type="entry name" value="CYTOCHROME C OXIDASE ASSEMBLY PROTEIN COX11-RELATED"/>
    <property type="match status" value="1"/>
</dbReference>
<dbReference type="Pfam" id="PF04442">
    <property type="entry name" value="CtaG_Cox11"/>
    <property type="match status" value="1"/>
</dbReference>
<dbReference type="PIRSF" id="PIRSF005413">
    <property type="entry name" value="COX11"/>
    <property type="match status" value="1"/>
</dbReference>
<dbReference type="SUPFAM" id="SSF110111">
    <property type="entry name" value="Ctag/Cox11"/>
    <property type="match status" value="1"/>
</dbReference>